<reference key="1">
    <citation type="journal article" date="2005" name="Nature">
        <title>Sequencing of Aspergillus nidulans and comparative analysis with A. fumigatus and A. oryzae.</title>
        <authorList>
            <person name="Galagan J.E."/>
            <person name="Calvo S.E."/>
            <person name="Cuomo C."/>
            <person name="Ma L.-J."/>
            <person name="Wortman J.R."/>
            <person name="Batzoglou S."/>
            <person name="Lee S.-I."/>
            <person name="Bastuerkmen M."/>
            <person name="Spevak C.C."/>
            <person name="Clutterbuck J."/>
            <person name="Kapitonov V."/>
            <person name="Jurka J."/>
            <person name="Scazzocchio C."/>
            <person name="Farman M.L."/>
            <person name="Butler J."/>
            <person name="Purcell S."/>
            <person name="Harris S."/>
            <person name="Braus G.H."/>
            <person name="Draht O."/>
            <person name="Busch S."/>
            <person name="D'Enfert C."/>
            <person name="Bouchier C."/>
            <person name="Goldman G.H."/>
            <person name="Bell-Pedersen D."/>
            <person name="Griffiths-Jones S."/>
            <person name="Doonan J.H."/>
            <person name="Yu J."/>
            <person name="Vienken K."/>
            <person name="Pain A."/>
            <person name="Freitag M."/>
            <person name="Selker E.U."/>
            <person name="Archer D.B."/>
            <person name="Penalva M.A."/>
            <person name="Oakley B.R."/>
            <person name="Momany M."/>
            <person name="Tanaka T."/>
            <person name="Kumagai T."/>
            <person name="Asai K."/>
            <person name="Machida M."/>
            <person name="Nierman W.C."/>
            <person name="Denning D.W."/>
            <person name="Caddick M.X."/>
            <person name="Hynes M."/>
            <person name="Paoletti M."/>
            <person name="Fischer R."/>
            <person name="Miller B.L."/>
            <person name="Dyer P.S."/>
            <person name="Sachs M.S."/>
            <person name="Osmani S.A."/>
            <person name="Birren B.W."/>
        </authorList>
    </citation>
    <scope>NUCLEOTIDE SEQUENCE [LARGE SCALE GENOMIC DNA]</scope>
    <source>
        <strain>FGSC A4 / ATCC 38163 / CBS 112.46 / NRRL 194 / M139</strain>
    </source>
</reference>
<reference key="2">
    <citation type="journal article" date="2009" name="Fungal Genet. Biol.">
        <title>The 2008 update of the Aspergillus nidulans genome annotation: a community effort.</title>
        <authorList>
            <person name="Wortman J.R."/>
            <person name="Gilsenan J.M."/>
            <person name="Joardar V."/>
            <person name="Deegan J."/>
            <person name="Clutterbuck J."/>
            <person name="Andersen M.R."/>
            <person name="Archer D."/>
            <person name="Bencina M."/>
            <person name="Braus G."/>
            <person name="Coutinho P."/>
            <person name="von Dohren H."/>
            <person name="Doonan J."/>
            <person name="Driessen A.J."/>
            <person name="Durek P."/>
            <person name="Espeso E."/>
            <person name="Fekete E."/>
            <person name="Flipphi M."/>
            <person name="Estrada C.G."/>
            <person name="Geysens S."/>
            <person name="Goldman G."/>
            <person name="de Groot P.W."/>
            <person name="Hansen K."/>
            <person name="Harris S.D."/>
            <person name="Heinekamp T."/>
            <person name="Helmstaedt K."/>
            <person name="Henrissat B."/>
            <person name="Hofmann G."/>
            <person name="Homan T."/>
            <person name="Horio T."/>
            <person name="Horiuchi H."/>
            <person name="James S."/>
            <person name="Jones M."/>
            <person name="Karaffa L."/>
            <person name="Karanyi Z."/>
            <person name="Kato M."/>
            <person name="Keller N."/>
            <person name="Kelly D.E."/>
            <person name="Kiel J.A."/>
            <person name="Kim J.M."/>
            <person name="van der Klei I.J."/>
            <person name="Klis F.M."/>
            <person name="Kovalchuk A."/>
            <person name="Krasevec N."/>
            <person name="Kubicek C.P."/>
            <person name="Liu B."/>
            <person name="Maccabe A."/>
            <person name="Meyer V."/>
            <person name="Mirabito P."/>
            <person name="Miskei M."/>
            <person name="Mos M."/>
            <person name="Mullins J."/>
            <person name="Nelson D.R."/>
            <person name="Nielsen J."/>
            <person name="Oakley B.R."/>
            <person name="Osmani S.A."/>
            <person name="Pakula T."/>
            <person name="Paszewski A."/>
            <person name="Paulsen I."/>
            <person name="Pilsyk S."/>
            <person name="Pocsi I."/>
            <person name="Punt P.J."/>
            <person name="Ram A.F."/>
            <person name="Ren Q."/>
            <person name="Robellet X."/>
            <person name="Robson G."/>
            <person name="Seiboth B."/>
            <person name="van Solingen P."/>
            <person name="Specht T."/>
            <person name="Sun J."/>
            <person name="Taheri-Talesh N."/>
            <person name="Takeshita N."/>
            <person name="Ussery D."/>
            <person name="vanKuyk P.A."/>
            <person name="Visser H."/>
            <person name="van de Vondervoort P.J."/>
            <person name="de Vries R.P."/>
            <person name="Walton J."/>
            <person name="Xiang X."/>
            <person name="Xiong Y."/>
            <person name="Zeng A.P."/>
            <person name="Brandt B.W."/>
            <person name="Cornell M.J."/>
            <person name="van den Hondel C.A."/>
            <person name="Visser J."/>
            <person name="Oliver S.G."/>
            <person name="Turner G."/>
        </authorList>
    </citation>
    <scope>GENOME REANNOTATION</scope>
    <source>
        <strain>FGSC A4 / ATCC 38163 / CBS 112.46 / NRRL 194 / M139</strain>
    </source>
</reference>
<gene>
    <name type="primary">sts1</name>
    <name type="ORF">AN4411</name>
</gene>
<feature type="chain" id="PRO_0000409411" description="Tethering factor for nuclear proteasome sts1">
    <location>
        <begin position="1"/>
        <end position="315"/>
    </location>
</feature>
<feature type="region of interest" description="Disordered" evidence="2">
    <location>
        <begin position="1"/>
        <end position="88"/>
    </location>
</feature>
<feature type="compositionally biased region" description="Polar residues" evidence="2">
    <location>
        <begin position="20"/>
        <end position="35"/>
    </location>
</feature>
<feature type="compositionally biased region" description="Basic and acidic residues" evidence="2">
    <location>
        <begin position="40"/>
        <end position="50"/>
    </location>
</feature>
<feature type="compositionally biased region" description="Polar residues" evidence="2">
    <location>
        <begin position="52"/>
        <end position="72"/>
    </location>
</feature>
<keyword id="KW-0963">Cytoplasm</keyword>
<keyword id="KW-0539">Nucleus</keyword>
<keyword id="KW-0653">Protein transport</keyword>
<keyword id="KW-1185">Reference proteome</keyword>
<keyword id="KW-0813">Transport</keyword>
<proteinExistence type="inferred from homology"/>
<organism>
    <name type="scientific">Emericella nidulans (strain FGSC A4 / ATCC 38163 / CBS 112.46 / NRRL 194 / M139)</name>
    <name type="common">Aspergillus nidulans</name>
    <dbReference type="NCBI Taxonomy" id="227321"/>
    <lineage>
        <taxon>Eukaryota</taxon>
        <taxon>Fungi</taxon>
        <taxon>Dikarya</taxon>
        <taxon>Ascomycota</taxon>
        <taxon>Pezizomycotina</taxon>
        <taxon>Eurotiomycetes</taxon>
        <taxon>Eurotiomycetidae</taxon>
        <taxon>Eurotiales</taxon>
        <taxon>Aspergillaceae</taxon>
        <taxon>Aspergillus</taxon>
        <taxon>Aspergillus subgen. Nidulantes</taxon>
    </lineage>
</organism>
<evidence type="ECO:0000250" key="1"/>
<evidence type="ECO:0000256" key="2">
    <source>
        <dbReference type="SAM" id="MobiDB-lite"/>
    </source>
</evidence>
<evidence type="ECO:0000305" key="3"/>
<sequence length="315" mass="34592">MNSLVATPPVPPHIYEYSRLSPSRPMSTPSHTPTTNRKRKAEDEHNDFDSRMSASPTNSPAFTPRTLPSSSRQIKRARPNMGGRPLSLPRLLETLDTDALRGVLRSICDRHPNLADEVVQTAPRPSVASALQVLRNYQSALQSSFPLGGNPESDYAYNRVRQPLGNLLEALSDFTPHFLPPNETQPSISLSYLDDVTEIIHQLPRWSSPQNNIERDSAYDEICKAWILVIREAAKRGGGIQLQYGGWDQKLAKHNQNSGGRLQAAVNDLASSLGWMHGPESQGFGSPGGNDLGSIREQLLSGTYGLGTPVKVGPW</sequence>
<dbReference type="EMBL" id="AACD01000076">
    <property type="protein sequence ID" value="EAA60328.1"/>
    <property type="molecule type" value="Genomic_DNA"/>
</dbReference>
<dbReference type="EMBL" id="BN001303">
    <property type="protein sequence ID" value="CBF77582.1"/>
    <property type="molecule type" value="Genomic_DNA"/>
</dbReference>
<dbReference type="RefSeq" id="XP_662015.1">
    <property type="nucleotide sequence ID" value="XM_656923.1"/>
</dbReference>
<dbReference type="SMR" id="Q5B4W9"/>
<dbReference type="FunCoup" id="Q5B4W9">
    <property type="interactions" value="10"/>
</dbReference>
<dbReference type="STRING" id="227321.Q5B4W9"/>
<dbReference type="EnsemblFungi" id="CBF77582">
    <property type="protein sequence ID" value="CBF77582"/>
    <property type="gene ID" value="ANIA_04411"/>
</dbReference>
<dbReference type="KEGG" id="ani:ANIA_04411"/>
<dbReference type="VEuPathDB" id="FungiDB:AN4411"/>
<dbReference type="eggNOG" id="ENOG502RNK4">
    <property type="taxonomic scope" value="Eukaryota"/>
</dbReference>
<dbReference type="HOGENOM" id="CLU_033658_0_0_1"/>
<dbReference type="InParanoid" id="Q5B4W9"/>
<dbReference type="OMA" id="DYTPHFL"/>
<dbReference type="OrthoDB" id="10061064at2759"/>
<dbReference type="Proteomes" id="UP000000560">
    <property type="component" value="Chromosome III"/>
</dbReference>
<dbReference type="GO" id="GO:0005737">
    <property type="term" value="C:cytoplasm"/>
    <property type="evidence" value="ECO:0007669"/>
    <property type="project" value="UniProtKB-SubCell"/>
</dbReference>
<dbReference type="GO" id="GO:0005634">
    <property type="term" value="C:nucleus"/>
    <property type="evidence" value="ECO:0007669"/>
    <property type="project" value="UniProtKB-SubCell"/>
</dbReference>
<dbReference type="GO" id="GO:0070628">
    <property type="term" value="F:proteasome binding"/>
    <property type="evidence" value="ECO:0000318"/>
    <property type="project" value="GO_Central"/>
</dbReference>
<dbReference type="GO" id="GO:0071630">
    <property type="term" value="P:nuclear protein quality control by the ubiquitin-proteasome system"/>
    <property type="evidence" value="ECO:0000318"/>
    <property type="project" value="GO_Central"/>
</dbReference>
<dbReference type="GO" id="GO:0031144">
    <property type="term" value="P:proteasome localization"/>
    <property type="evidence" value="ECO:0000318"/>
    <property type="project" value="GO_Central"/>
</dbReference>
<dbReference type="GO" id="GO:0015031">
    <property type="term" value="P:protein transport"/>
    <property type="evidence" value="ECO:0007669"/>
    <property type="project" value="UniProtKB-KW"/>
</dbReference>
<dbReference type="FunFam" id="1.20.58.1590:FF:000001">
    <property type="entry name" value="Tethering factor for nuclear proteasome STS1"/>
    <property type="match status" value="1"/>
</dbReference>
<dbReference type="Gene3D" id="1.20.58.1590">
    <property type="entry name" value="Tethering factor for nuclear proteasome Cut8/Sts1"/>
    <property type="match status" value="1"/>
</dbReference>
<dbReference type="InterPro" id="IPR013868">
    <property type="entry name" value="Cut8/Sts1_fam"/>
</dbReference>
<dbReference type="InterPro" id="IPR038422">
    <property type="entry name" value="Cut8/Sts1_sf"/>
</dbReference>
<dbReference type="PANTHER" id="PTHR28032">
    <property type="entry name" value="FI02826P"/>
    <property type="match status" value="1"/>
</dbReference>
<dbReference type="PANTHER" id="PTHR28032:SF1">
    <property type="entry name" value="FI02826P"/>
    <property type="match status" value="1"/>
</dbReference>
<dbReference type="Pfam" id="PF08559">
    <property type="entry name" value="Cut8"/>
    <property type="match status" value="1"/>
</dbReference>
<comment type="function">
    <text evidence="1">Involved in ubiquitin-mediated protein degradation. Regulatory factor in the ubiquitin/proteasome pathway that controls the turnover of proteasome substrates. Targets proteasomes to the nucleus and facilitates the degradation of nuclear proteins (By similarity).</text>
</comment>
<comment type="subunit">
    <text evidence="1">Binds the proteasome.</text>
</comment>
<comment type="subcellular location">
    <subcellularLocation>
        <location evidence="1">Cytoplasm</location>
    </subcellularLocation>
    <subcellularLocation>
        <location evidence="1">Nucleus</location>
    </subcellularLocation>
</comment>
<comment type="similarity">
    <text evidence="3">Belongs to the cut8/STS1 family.</text>
</comment>
<accession>Q5B4W9</accession>
<accession>C8V8T1</accession>
<name>STS1_EMENI</name>
<protein>
    <recommendedName>
        <fullName>Tethering factor for nuclear proteasome sts1</fullName>
    </recommendedName>
</protein>